<keyword id="KW-0067">ATP-binding</keyword>
<keyword id="KW-0408">Iron</keyword>
<keyword id="KW-0411">Iron-sulfur</keyword>
<keyword id="KW-0479">Metal-binding</keyword>
<keyword id="KW-0500">Molybdenum</keyword>
<keyword id="KW-0535">Nitrogen fixation</keyword>
<keyword id="KW-0547">Nucleotide-binding</keyword>
<keyword id="KW-0560">Oxidoreductase</keyword>
<keyword id="KW-1185">Reference proteome</keyword>
<organism>
    <name type="scientific">Crocosphaera subtropica (strain ATCC 51142 / BH68)</name>
    <name type="common">Cyanothece sp. (strain ATCC 51142)</name>
    <dbReference type="NCBI Taxonomy" id="43989"/>
    <lineage>
        <taxon>Bacteria</taxon>
        <taxon>Bacillati</taxon>
        <taxon>Cyanobacteriota</taxon>
        <taxon>Cyanophyceae</taxon>
        <taxon>Oscillatoriophycideae</taxon>
        <taxon>Chroococcales</taxon>
        <taxon>Aphanothecaceae</taxon>
        <taxon>Crocosphaera</taxon>
        <taxon>Crocosphaera subtropica</taxon>
    </lineage>
</organism>
<accession>O07642</accession>
<accession>A1KYD6</accession>
<proteinExistence type="inferred from homology"/>
<protein>
    <recommendedName>
        <fullName>Nitrogenase molybdenum-iron protein alpha chain</fullName>
        <ecNumber>1.18.6.1</ecNumber>
    </recommendedName>
    <alternativeName>
        <fullName>Dinitrogenase</fullName>
    </alternativeName>
    <alternativeName>
        <fullName>Nitrogenase component I</fullName>
    </alternativeName>
</protein>
<sequence length="480" mass="53682">MATVEDNKKLIADVLSTYPEKAAKKRAKHLGVYEEGEADCGVKSNKQSLPGVMTARGCAYAGSKGVVWGPIKDMVHISHGPVGCGYYSWSGRRNYYIGTTGVDSFGTMQFTSDFQERDIVFGGDKKLAKIIDEIEELFPLNGGVSVQSECPVGLIGDDIESVARTKSKETGKSVVPVRCEGFRGVSQSLGHHIANDMIRDWVFPTADKENAEKGFEGTPYDVAIIGDYNIGGDAWSSRILLEEIGLRVVAQWSGDGTLTEMKATPNVKLNLIHCYRSMNYISRHMEEKYGIPWLEYNFFGPSKIAASLREIASRFDEKIQAKAEEVIEKYRKQSEEIIAKYRPRLEGKTVMMMVGGLRPRHVVPAFKDLGMEIIGTGYEFAHGDDYKRTTGYVEDATLIYDDVTGYEFEEFVKELKPDLVAAGIKEKYVFQKMALPFRQMHSWDYSGPYHGYDGFAIFARDMDLALNSPTWGLIGTPWNK</sequence>
<dbReference type="EC" id="1.18.6.1"/>
<dbReference type="EMBL" id="AF003337">
    <property type="protein sequence ID" value="AAB61283.1"/>
    <property type="molecule type" value="Genomic_DNA"/>
</dbReference>
<dbReference type="EMBL" id="AY728386">
    <property type="protein sequence ID" value="AAW56989.1"/>
    <property type="molecule type" value="Genomic_DNA"/>
</dbReference>
<dbReference type="EMBL" id="CP000806">
    <property type="protein sequence ID" value="ACB49911.1"/>
    <property type="molecule type" value="Genomic_DNA"/>
</dbReference>
<dbReference type="RefSeq" id="WP_009546640.1">
    <property type="nucleotide sequence ID" value="NC_010546.1"/>
</dbReference>
<dbReference type="SMR" id="O07642"/>
<dbReference type="STRING" id="43989.cce_0560"/>
<dbReference type="KEGG" id="cyt:cce_0560"/>
<dbReference type="eggNOG" id="COG2710">
    <property type="taxonomic scope" value="Bacteria"/>
</dbReference>
<dbReference type="HOGENOM" id="CLU_025876_1_1_3"/>
<dbReference type="OrthoDB" id="9767044at2"/>
<dbReference type="Proteomes" id="UP000001203">
    <property type="component" value="Chromosome circular"/>
</dbReference>
<dbReference type="GO" id="GO:0016612">
    <property type="term" value="C:molybdenum-iron nitrogenase complex"/>
    <property type="evidence" value="ECO:0007669"/>
    <property type="project" value="InterPro"/>
</dbReference>
<dbReference type="GO" id="GO:0005524">
    <property type="term" value="F:ATP binding"/>
    <property type="evidence" value="ECO:0007669"/>
    <property type="project" value="UniProtKB-KW"/>
</dbReference>
<dbReference type="GO" id="GO:0051536">
    <property type="term" value="F:iron-sulfur cluster binding"/>
    <property type="evidence" value="ECO:0007669"/>
    <property type="project" value="UniProtKB-KW"/>
</dbReference>
<dbReference type="GO" id="GO:0046872">
    <property type="term" value="F:metal ion binding"/>
    <property type="evidence" value="ECO:0007669"/>
    <property type="project" value="UniProtKB-KW"/>
</dbReference>
<dbReference type="GO" id="GO:0016163">
    <property type="term" value="F:nitrogenase activity"/>
    <property type="evidence" value="ECO:0007669"/>
    <property type="project" value="UniProtKB-EC"/>
</dbReference>
<dbReference type="GO" id="GO:0009399">
    <property type="term" value="P:nitrogen fixation"/>
    <property type="evidence" value="ECO:0007669"/>
    <property type="project" value="UniProtKB-KW"/>
</dbReference>
<dbReference type="CDD" id="cd01976">
    <property type="entry name" value="Nitrogenase_MoFe_alpha"/>
    <property type="match status" value="1"/>
</dbReference>
<dbReference type="Gene3D" id="3.40.50.1980">
    <property type="entry name" value="Nitrogenase molybdenum iron protein domain"/>
    <property type="match status" value="3"/>
</dbReference>
<dbReference type="InterPro" id="IPR000510">
    <property type="entry name" value="Nase/OxRdtase_comp1"/>
</dbReference>
<dbReference type="InterPro" id="IPR010143">
    <property type="entry name" value="Nase_comp1_asu"/>
</dbReference>
<dbReference type="InterPro" id="IPR000318">
    <property type="entry name" value="Nase_comp1_CS"/>
</dbReference>
<dbReference type="InterPro" id="IPR005972">
    <property type="entry name" value="Nase_Mo-Fe_asu"/>
</dbReference>
<dbReference type="NCBIfam" id="TIGR01862">
    <property type="entry name" value="N2-ase-Ialpha"/>
    <property type="match status" value="1"/>
</dbReference>
<dbReference type="NCBIfam" id="TIGR01282">
    <property type="entry name" value="nifD"/>
    <property type="match status" value="1"/>
</dbReference>
<dbReference type="PANTHER" id="PTHR43457">
    <property type="entry name" value="NITROGENASE MOLYBDENUM-IRON PROTEIN ALPHA CHAIN"/>
    <property type="match status" value="1"/>
</dbReference>
<dbReference type="PANTHER" id="PTHR43457:SF1">
    <property type="entry name" value="NITROGENASE MOLYBDENUM-IRON PROTEIN ALPHA CHAIN"/>
    <property type="match status" value="1"/>
</dbReference>
<dbReference type="Pfam" id="PF00148">
    <property type="entry name" value="Oxidored_nitro"/>
    <property type="match status" value="1"/>
</dbReference>
<dbReference type="SUPFAM" id="SSF53807">
    <property type="entry name" value="Helical backbone' metal receptor"/>
    <property type="match status" value="1"/>
</dbReference>
<dbReference type="PROSITE" id="PS00699">
    <property type="entry name" value="NITROGENASE_1_1"/>
    <property type="match status" value="1"/>
</dbReference>
<dbReference type="PROSITE" id="PS00090">
    <property type="entry name" value="NITROGENASE_1_2"/>
    <property type="match status" value="1"/>
</dbReference>
<comment type="function">
    <text>This molybdenum-iron protein is part of the nitrogenase complex that catalyzes the key enzymatic reactions in nitrogen fixation.</text>
</comment>
<comment type="catalytic activity">
    <reaction>
        <text>N2 + 8 reduced [2Fe-2S]-[ferredoxin] + 16 ATP + 16 H2O = H2 + 8 oxidized [2Fe-2S]-[ferredoxin] + 2 NH4(+) + 16 ADP + 16 phosphate + 6 H(+)</text>
        <dbReference type="Rhea" id="RHEA:21448"/>
        <dbReference type="Rhea" id="RHEA-COMP:10000"/>
        <dbReference type="Rhea" id="RHEA-COMP:10001"/>
        <dbReference type="ChEBI" id="CHEBI:15377"/>
        <dbReference type="ChEBI" id="CHEBI:15378"/>
        <dbReference type="ChEBI" id="CHEBI:17997"/>
        <dbReference type="ChEBI" id="CHEBI:18276"/>
        <dbReference type="ChEBI" id="CHEBI:28938"/>
        <dbReference type="ChEBI" id="CHEBI:30616"/>
        <dbReference type="ChEBI" id="CHEBI:33737"/>
        <dbReference type="ChEBI" id="CHEBI:33738"/>
        <dbReference type="ChEBI" id="CHEBI:43474"/>
        <dbReference type="ChEBI" id="CHEBI:456216"/>
        <dbReference type="EC" id="1.18.6.1"/>
    </reaction>
</comment>
<comment type="cofactor">
    <cofactor evidence="1">
        <name>[8Fe-7S] cluster</name>
        <dbReference type="ChEBI" id="CHEBI:21143"/>
    </cofactor>
    <text evidence="1">Binds 1 [8Fe-7S] cluster per heterodimer.</text>
</comment>
<comment type="cofactor">
    <cofactor evidence="1">
        <name>[7Fe-Mo-9S-C-homocitryl] cluster</name>
        <dbReference type="ChEBI" id="CHEBI:30409"/>
    </cofactor>
    <text evidence="1">Binds 1 [7Fe-Mo-9S-C-homocitryl] cluster per subunit.</text>
</comment>
<comment type="subunit">
    <text>Tetramer of two alpha and two beta chains. Forms complex with the iron protein (nitrogenase component 2).</text>
</comment>
<comment type="similarity">
    <text evidence="2">Belongs to the NifD/NifK/NifE/NifN family.</text>
</comment>
<name>NIFD_CROS5</name>
<gene>
    <name type="primary">nifD</name>
    <name type="ordered locus">cce_0560</name>
</gene>
<reference key="1">
    <citation type="journal article" date="1999" name="Biochim. Biophys. Acta">
        <title>Analysis of the nifHDK operon and structure of the NifH protein from the unicellular, diazotrophic cyanobacterium, Cyanothece strain sp. ATCC 51142.</title>
        <authorList>
            <person name="Colon-Lopez M.S."/>
            <person name="Tang H.-Y."/>
            <person name="Tucker D.L."/>
            <person name="Sherman L.A."/>
        </authorList>
    </citation>
    <scope>NUCLEOTIDE SEQUENCE [GENOMIC DNA]</scope>
</reference>
<reference key="2">
    <citation type="journal article" date="2008" name="BMC Evol. Biol.">
        <title>The cyanobacterial endosymbiont of the unicellular algae Rhopalodia gibba shows reductive genome evolution.</title>
        <authorList>
            <person name="Kneip C."/>
            <person name="Voss C."/>
            <person name="Lockhart P.J."/>
            <person name="Maier U.G."/>
        </authorList>
    </citation>
    <scope>NUCLEOTIDE SEQUENCE [GENOMIC DNA]</scope>
</reference>
<reference key="3">
    <citation type="journal article" date="2008" name="Proc. Natl. Acad. Sci. U.S.A.">
        <title>The genome of Cyanothece 51142, a unicellular diazotrophic cyanobacterium important in the marine nitrogen cycle.</title>
        <authorList>
            <person name="Welsh E.A."/>
            <person name="Liberton M."/>
            <person name="Stoeckel J."/>
            <person name="Loh T."/>
            <person name="Elvitigala T."/>
            <person name="Wang C."/>
            <person name="Wollam A."/>
            <person name="Fulton R.S."/>
            <person name="Clifton S.W."/>
            <person name="Jacobs J.M."/>
            <person name="Aurora R."/>
            <person name="Ghosh B.K."/>
            <person name="Sherman L.A."/>
            <person name="Smith R.D."/>
            <person name="Wilson R.K."/>
            <person name="Pakrasi H.B."/>
        </authorList>
    </citation>
    <scope>NUCLEOTIDE SEQUENCE [LARGE SCALE GENOMIC DNA]</scope>
    <source>
        <strain>ATCC 51142 / BH68</strain>
    </source>
</reference>
<feature type="chain" id="PRO_0000153065" description="Nitrogenase molybdenum-iron protein alpha chain">
    <location>
        <begin position="1"/>
        <end position="480"/>
    </location>
</feature>
<feature type="binding site" evidence="1">
    <location>
        <position position="58"/>
    </location>
    <ligand>
        <name>[8Fe-7S] cluster</name>
        <dbReference type="ChEBI" id="CHEBI:21143"/>
        <note>ligand shared with beta chain</note>
    </ligand>
</feature>
<feature type="binding site" evidence="1">
    <location>
        <position position="84"/>
    </location>
    <ligand>
        <name>[8Fe-7S] cluster</name>
        <dbReference type="ChEBI" id="CHEBI:21143"/>
        <note>ligand shared with beta chain</note>
    </ligand>
</feature>
<feature type="binding site" evidence="1">
    <location>
        <position position="150"/>
    </location>
    <ligand>
        <name>[8Fe-7S] cluster</name>
        <dbReference type="ChEBI" id="CHEBI:21143"/>
        <note>ligand shared with beta chain</note>
    </ligand>
</feature>
<feature type="binding site" evidence="1">
    <location>
        <position position="274"/>
    </location>
    <ligand>
        <name>[7Fe-Mo-9S-C-homocitryl] cluster</name>
        <dbReference type="ChEBI" id="CHEBI:30409"/>
    </ligand>
</feature>
<feature type="binding site" evidence="1">
    <location>
        <position position="441"/>
    </location>
    <ligand>
        <name>[7Fe-Mo-9S-C-homocitryl] cluster</name>
        <dbReference type="ChEBI" id="CHEBI:30409"/>
    </ligand>
</feature>
<evidence type="ECO:0000250" key="1"/>
<evidence type="ECO:0000305" key="2"/>